<protein>
    <recommendedName>
        <fullName evidence="3">Serine hydroxymethyltransferase, cytosolic</fullName>
        <shortName evidence="3">SHMT</shortName>
        <ecNumber evidence="5">2.1.2.1</ecNumber>
    </recommendedName>
    <alternativeName>
        <fullName>Glycine hydroxymethyltransferase</fullName>
    </alternativeName>
    <alternativeName>
        <fullName>Serine methylase</fullName>
    </alternativeName>
</protein>
<sequence length="469" mass="52218">MPYTLSDAHHKLITSHLVDTDPEVDSIIKDEIERQKHSIDLIASENFTSTSVFDALGTPLSNKYSEGYPGARYYGGNEHIDRMEILCQQRALKAFHVTPDKWGVNVQTLSGSPANLQVYQAIMKPHERLMGLYLPDGGHLSHGYATENRKISAVSTYFESFPYRVNPETGIIDYDTLEKNAILYRPKVLVAGTSAYCRLIDYKRMREIADKCGAYLMVDMAHISGLIAAGVIPSPFEYADIVTTTTHKSLRGPRGAMIFFRRGVRSINPKTGKEVLYDLENPINFSVFPGHQGGPHNHTIAALATALKQAATPEFKEYQTQVLKNAKALESEFKNLGYRLVSNGTDSHMVLVSLREKGVDGARVEYICEKINIALNKNSIPGDKSALVPGGVRIGAPAMTTRGMGEEDFHRIVQYINKAVEFAQQVQQSLPKDACRLKDFKAKVDEGSDVLNTWKKEIYDWAGEYPLAV</sequence>
<comment type="function">
    <text evidence="5">Interconversion of serine and glycine.</text>
</comment>
<comment type="catalytic activity">
    <reaction evidence="5">
        <text>(6R)-5,10-methylene-5,6,7,8-tetrahydrofolate + glycine + H2O = (6S)-5,6,7,8-tetrahydrofolate + L-serine</text>
        <dbReference type="Rhea" id="RHEA:15481"/>
        <dbReference type="ChEBI" id="CHEBI:15377"/>
        <dbReference type="ChEBI" id="CHEBI:15636"/>
        <dbReference type="ChEBI" id="CHEBI:33384"/>
        <dbReference type="ChEBI" id="CHEBI:57305"/>
        <dbReference type="ChEBI" id="CHEBI:57453"/>
        <dbReference type="EC" id="2.1.2.1"/>
    </reaction>
</comment>
<comment type="cofactor">
    <cofactor evidence="1">
        <name>pyridoxal 5'-phosphate</name>
        <dbReference type="ChEBI" id="CHEBI:597326"/>
    </cofactor>
</comment>
<comment type="pathway">
    <text evidence="5">One-carbon metabolism; tetrahydrofolate interconversion.</text>
</comment>
<comment type="subunit">
    <text evidence="1">Homotetramer.</text>
</comment>
<comment type="subcellular location">
    <subcellularLocation>
        <location evidence="5">Cytoplasm</location>
    </subcellularLocation>
</comment>
<comment type="miscellaneous">
    <text evidence="5">In eukaryotes there are two forms of the enzymes: a cytosolic one and a mitochondrial one.</text>
</comment>
<comment type="miscellaneous">
    <text evidence="2">Present with 67600 molecules/cell in log phase SD medium.</text>
</comment>
<comment type="similarity">
    <text evidence="4">Belongs to the SHMT family.</text>
</comment>
<gene>
    <name evidence="3" type="primary">SHM2</name>
    <name type="synonym">SHMT2</name>
    <name type="ordered locus">YLR058C</name>
    <name type="ORF">L2156</name>
</gene>
<feature type="chain" id="PRO_0000113516" description="Serine hydroxymethyltransferase, cytosolic">
    <location>
        <begin position="1"/>
        <end position="469"/>
    </location>
</feature>
<feature type="modified residue" description="Phosphothreonine" evidence="7">
    <location>
        <position position="20"/>
    </location>
</feature>
<feature type="modified residue" description="Phosphoserine" evidence="6 7">
    <location>
        <position position="26"/>
    </location>
</feature>
<feature type="modified residue" description="N6-(pyridoxal phosphate)lysine" evidence="1">
    <location>
        <position position="248"/>
    </location>
</feature>
<feature type="modified residue" description="Phosphoserine" evidence="6 7">
    <location>
        <position position="429"/>
    </location>
</feature>
<feature type="cross-link" description="Glycyl lysine isopeptide (Lys-Gly) (interchain with G-Cter in ubiquitin)" evidence="8">
    <location>
        <position position="456"/>
    </location>
</feature>
<feature type="sequence conflict" description="In Ref. 1; AAA21023." evidence="4" ref="1">
    <original>S</original>
    <variation>K</variation>
    <location>
        <position position="429"/>
    </location>
</feature>
<organism>
    <name type="scientific">Saccharomyces cerevisiae (strain ATCC 204508 / S288c)</name>
    <name type="common">Baker's yeast</name>
    <dbReference type="NCBI Taxonomy" id="559292"/>
    <lineage>
        <taxon>Eukaryota</taxon>
        <taxon>Fungi</taxon>
        <taxon>Dikarya</taxon>
        <taxon>Ascomycota</taxon>
        <taxon>Saccharomycotina</taxon>
        <taxon>Saccharomycetes</taxon>
        <taxon>Saccharomycetales</taxon>
        <taxon>Saccharomycetaceae</taxon>
        <taxon>Saccharomyces</taxon>
    </lineage>
</organism>
<proteinExistence type="evidence at protein level"/>
<keyword id="KW-0963">Cytoplasm</keyword>
<keyword id="KW-0903">Direct protein sequencing</keyword>
<keyword id="KW-1017">Isopeptide bond</keyword>
<keyword id="KW-0554">One-carbon metabolism</keyword>
<keyword id="KW-0597">Phosphoprotein</keyword>
<keyword id="KW-0663">Pyridoxal phosphate</keyword>
<keyword id="KW-1185">Reference proteome</keyword>
<keyword id="KW-0808">Transferase</keyword>
<keyword id="KW-0832">Ubl conjugation</keyword>
<dbReference type="EC" id="2.1.2.1" evidence="5"/>
<dbReference type="EMBL" id="L22529">
    <property type="protein sequence ID" value="AAA21023.1"/>
    <property type="molecule type" value="Genomic_DNA"/>
</dbReference>
<dbReference type="EMBL" id="X94607">
    <property type="protein sequence ID" value="CAA64305.1"/>
    <property type="molecule type" value="Genomic_DNA"/>
</dbReference>
<dbReference type="EMBL" id="Z73230">
    <property type="protein sequence ID" value="CAA97588.1"/>
    <property type="molecule type" value="Genomic_DNA"/>
</dbReference>
<dbReference type="EMBL" id="BK006945">
    <property type="protein sequence ID" value="DAA09376.1"/>
    <property type="molecule type" value="Genomic_DNA"/>
</dbReference>
<dbReference type="PIR" id="S61632">
    <property type="entry name" value="S61632"/>
</dbReference>
<dbReference type="RefSeq" id="NP_013159.1">
    <property type="nucleotide sequence ID" value="NM_001181945.1"/>
</dbReference>
<dbReference type="SMR" id="P37291"/>
<dbReference type="BioGRID" id="31333">
    <property type="interactions" value="172"/>
</dbReference>
<dbReference type="ComplexPortal" id="CPX-9181">
    <property type="entry name" value="SESAME metabolic enzyme complex"/>
</dbReference>
<dbReference type="DIP" id="DIP-2602N"/>
<dbReference type="FunCoup" id="P37291">
    <property type="interactions" value="1162"/>
</dbReference>
<dbReference type="IntAct" id="P37291">
    <property type="interactions" value="32"/>
</dbReference>
<dbReference type="MINT" id="P37291"/>
<dbReference type="STRING" id="4932.YLR058C"/>
<dbReference type="iPTMnet" id="P37291"/>
<dbReference type="PaxDb" id="4932-YLR058C"/>
<dbReference type="PeptideAtlas" id="P37291"/>
<dbReference type="EnsemblFungi" id="YLR058C_mRNA">
    <property type="protein sequence ID" value="YLR058C"/>
    <property type="gene ID" value="YLR058C"/>
</dbReference>
<dbReference type="GeneID" id="850747"/>
<dbReference type="KEGG" id="sce:YLR058C"/>
<dbReference type="AGR" id="SGD:S000004048"/>
<dbReference type="SGD" id="S000004048">
    <property type="gene designation" value="SHM2"/>
</dbReference>
<dbReference type="VEuPathDB" id="FungiDB:YLR058C"/>
<dbReference type="eggNOG" id="KOG2467">
    <property type="taxonomic scope" value="Eukaryota"/>
</dbReference>
<dbReference type="GeneTree" id="ENSGT00390000002762"/>
<dbReference type="HOGENOM" id="CLU_022477_0_1_1"/>
<dbReference type="InParanoid" id="P37291"/>
<dbReference type="OMA" id="CQFANVQ"/>
<dbReference type="OrthoDB" id="10265628at2759"/>
<dbReference type="BioCyc" id="MetaCyc:YLR058C-MONOMER"/>
<dbReference type="BioCyc" id="YEAST:YLR058C-MONOMER"/>
<dbReference type="UniPathway" id="UPA00193"/>
<dbReference type="BioGRID-ORCS" id="850747">
    <property type="hits" value="1 hit in 10 CRISPR screens"/>
</dbReference>
<dbReference type="PRO" id="PR:P37291"/>
<dbReference type="Proteomes" id="UP000002311">
    <property type="component" value="Chromosome XII"/>
</dbReference>
<dbReference type="RNAct" id="P37291">
    <property type="molecule type" value="protein"/>
</dbReference>
<dbReference type="GO" id="GO:0005737">
    <property type="term" value="C:cytoplasm"/>
    <property type="evidence" value="ECO:0000314"/>
    <property type="project" value="SGD"/>
</dbReference>
<dbReference type="GO" id="GO:0043332">
    <property type="term" value="C:mating projection tip"/>
    <property type="evidence" value="ECO:0007005"/>
    <property type="project" value="SGD"/>
</dbReference>
<dbReference type="GO" id="GO:0005739">
    <property type="term" value="C:mitochondrion"/>
    <property type="evidence" value="ECO:0000318"/>
    <property type="project" value="GO_Central"/>
</dbReference>
<dbReference type="GO" id="GO:0005886">
    <property type="term" value="C:plasma membrane"/>
    <property type="evidence" value="ECO:0007005"/>
    <property type="project" value="SGD"/>
</dbReference>
<dbReference type="GO" id="GO:0004372">
    <property type="term" value="F:glycine hydroxymethyltransferase activity"/>
    <property type="evidence" value="ECO:0000315"/>
    <property type="project" value="SGD"/>
</dbReference>
<dbReference type="GO" id="GO:0030170">
    <property type="term" value="F:pyridoxal phosphate binding"/>
    <property type="evidence" value="ECO:0000318"/>
    <property type="project" value="GO_Central"/>
</dbReference>
<dbReference type="GO" id="GO:0019264">
    <property type="term" value="P:glycine biosynthetic process from serine"/>
    <property type="evidence" value="ECO:0000318"/>
    <property type="project" value="GO_Central"/>
</dbReference>
<dbReference type="GO" id="GO:0006730">
    <property type="term" value="P:one-carbon metabolic process"/>
    <property type="evidence" value="ECO:0000315"/>
    <property type="project" value="SGD"/>
</dbReference>
<dbReference type="GO" id="GO:0035999">
    <property type="term" value="P:tetrahydrofolate interconversion"/>
    <property type="evidence" value="ECO:0007669"/>
    <property type="project" value="UniProtKB-UniPathway"/>
</dbReference>
<dbReference type="GO" id="GO:0046653">
    <property type="term" value="P:tetrahydrofolate metabolic process"/>
    <property type="evidence" value="ECO:0000318"/>
    <property type="project" value="GO_Central"/>
</dbReference>
<dbReference type="CDD" id="cd00378">
    <property type="entry name" value="SHMT"/>
    <property type="match status" value="1"/>
</dbReference>
<dbReference type="FunFam" id="3.40.640.10:FF:000097">
    <property type="entry name" value="Serine hydroxymethyltransferase"/>
    <property type="match status" value="1"/>
</dbReference>
<dbReference type="Gene3D" id="3.90.1150.10">
    <property type="entry name" value="Aspartate Aminotransferase, domain 1"/>
    <property type="match status" value="1"/>
</dbReference>
<dbReference type="Gene3D" id="3.40.640.10">
    <property type="entry name" value="Type I PLP-dependent aspartate aminotransferase-like (Major domain)"/>
    <property type="match status" value="1"/>
</dbReference>
<dbReference type="HAMAP" id="MF_00051">
    <property type="entry name" value="SHMT"/>
    <property type="match status" value="1"/>
</dbReference>
<dbReference type="InterPro" id="IPR015424">
    <property type="entry name" value="PyrdxlP-dep_Trfase"/>
</dbReference>
<dbReference type="InterPro" id="IPR015421">
    <property type="entry name" value="PyrdxlP-dep_Trfase_major"/>
</dbReference>
<dbReference type="InterPro" id="IPR015422">
    <property type="entry name" value="PyrdxlP-dep_Trfase_small"/>
</dbReference>
<dbReference type="InterPro" id="IPR001085">
    <property type="entry name" value="Ser_HO-MeTrfase"/>
</dbReference>
<dbReference type="InterPro" id="IPR049943">
    <property type="entry name" value="Ser_HO-MeTrfase-like"/>
</dbReference>
<dbReference type="InterPro" id="IPR019798">
    <property type="entry name" value="Ser_HO-MeTrfase_PLP_BS"/>
</dbReference>
<dbReference type="InterPro" id="IPR039429">
    <property type="entry name" value="SHMT-like_dom"/>
</dbReference>
<dbReference type="NCBIfam" id="NF000586">
    <property type="entry name" value="PRK00011.1"/>
    <property type="match status" value="1"/>
</dbReference>
<dbReference type="PANTHER" id="PTHR11680">
    <property type="entry name" value="SERINE HYDROXYMETHYLTRANSFERASE"/>
    <property type="match status" value="1"/>
</dbReference>
<dbReference type="PANTHER" id="PTHR11680:SF28">
    <property type="entry name" value="SERINE HYDROXYMETHYLTRANSFERASE, MITOCHONDRIAL"/>
    <property type="match status" value="1"/>
</dbReference>
<dbReference type="Pfam" id="PF00464">
    <property type="entry name" value="SHMT"/>
    <property type="match status" value="1"/>
</dbReference>
<dbReference type="PIRSF" id="PIRSF000412">
    <property type="entry name" value="SHMT"/>
    <property type="match status" value="1"/>
</dbReference>
<dbReference type="SUPFAM" id="SSF53383">
    <property type="entry name" value="PLP-dependent transferases"/>
    <property type="match status" value="1"/>
</dbReference>
<dbReference type="PROSITE" id="PS00096">
    <property type="entry name" value="SHMT"/>
    <property type="match status" value="1"/>
</dbReference>
<evidence type="ECO:0000250" key="1">
    <source>
        <dbReference type="UniProtKB" id="P34897"/>
    </source>
</evidence>
<evidence type="ECO:0000269" key="2">
    <source>
    </source>
</evidence>
<evidence type="ECO:0000303" key="3">
    <source>
    </source>
</evidence>
<evidence type="ECO:0000305" key="4"/>
<evidence type="ECO:0000305" key="5">
    <source>
    </source>
</evidence>
<evidence type="ECO:0007744" key="6">
    <source>
    </source>
</evidence>
<evidence type="ECO:0007744" key="7">
    <source>
    </source>
</evidence>
<evidence type="ECO:0007744" key="8">
    <source>
    </source>
</evidence>
<name>GLYC_YEAST</name>
<reference key="1">
    <citation type="journal article" date="1994" name="J. Biol. Chem.">
        <title>Cloning and molecular characterization of three genes, including two genes encoding serine hydroxymethyltransferases, whose inactivation is required to render yeast auxotrophic for glycine.</title>
        <authorList>
            <person name="McNeil J.B."/>
            <person name="McIntosh E.M."/>
            <person name="Taylor B.V."/>
            <person name="Zhang F.-R."/>
            <person name="Tang S."/>
            <person name="Bognar A.L."/>
        </authorList>
    </citation>
    <scope>NUCLEOTIDE SEQUENCE [GENOMIC DNA]</scope>
    <scope>FUNCTION</scope>
    <source>
        <strain>ATCC 201238 / W303-1B</strain>
    </source>
</reference>
<reference key="2">
    <citation type="journal article" date="1997" name="Nature">
        <title>The nucleotide sequence of Saccharomyces cerevisiae chromosome XII.</title>
        <authorList>
            <person name="Johnston M."/>
            <person name="Hillier L.W."/>
            <person name="Riles L."/>
            <person name="Albermann K."/>
            <person name="Andre B."/>
            <person name="Ansorge W."/>
            <person name="Benes V."/>
            <person name="Brueckner M."/>
            <person name="Delius H."/>
            <person name="Dubois E."/>
            <person name="Duesterhoeft A."/>
            <person name="Entian K.-D."/>
            <person name="Floeth M."/>
            <person name="Goffeau A."/>
            <person name="Hebling U."/>
            <person name="Heumann K."/>
            <person name="Heuss-Neitzel D."/>
            <person name="Hilbert H."/>
            <person name="Hilger F."/>
            <person name="Kleine K."/>
            <person name="Koetter P."/>
            <person name="Louis E.J."/>
            <person name="Messenguy F."/>
            <person name="Mewes H.-W."/>
            <person name="Miosga T."/>
            <person name="Moestl D."/>
            <person name="Mueller-Auer S."/>
            <person name="Nentwich U."/>
            <person name="Obermaier B."/>
            <person name="Piravandi E."/>
            <person name="Pohl T.M."/>
            <person name="Portetelle D."/>
            <person name="Purnelle B."/>
            <person name="Rechmann S."/>
            <person name="Rieger M."/>
            <person name="Rinke M."/>
            <person name="Rose M."/>
            <person name="Scharfe M."/>
            <person name="Scherens B."/>
            <person name="Scholler P."/>
            <person name="Schwager C."/>
            <person name="Schwarz S."/>
            <person name="Underwood A.P."/>
            <person name="Urrestarazu L.A."/>
            <person name="Vandenbol M."/>
            <person name="Verhasselt P."/>
            <person name="Vierendeels F."/>
            <person name="Voet M."/>
            <person name="Volckaert G."/>
            <person name="Voss H."/>
            <person name="Wambutt R."/>
            <person name="Wedler E."/>
            <person name="Wedler H."/>
            <person name="Zimmermann F.K."/>
            <person name="Zollner A."/>
            <person name="Hani J."/>
            <person name="Hoheisel J.D."/>
        </authorList>
    </citation>
    <scope>NUCLEOTIDE SEQUENCE [LARGE SCALE GENOMIC DNA]</scope>
    <source>
        <strain>ATCC 204508 / S288c</strain>
    </source>
</reference>
<reference key="3">
    <citation type="journal article" date="2014" name="G3 (Bethesda)">
        <title>The reference genome sequence of Saccharomyces cerevisiae: Then and now.</title>
        <authorList>
            <person name="Engel S.R."/>
            <person name="Dietrich F.S."/>
            <person name="Fisk D.G."/>
            <person name="Binkley G."/>
            <person name="Balakrishnan R."/>
            <person name="Costanzo M.C."/>
            <person name="Dwight S.S."/>
            <person name="Hitz B.C."/>
            <person name="Karra K."/>
            <person name="Nash R.S."/>
            <person name="Weng S."/>
            <person name="Wong E.D."/>
            <person name="Lloyd P."/>
            <person name="Skrzypek M.S."/>
            <person name="Miyasato S.R."/>
            <person name="Simison M."/>
            <person name="Cherry J.M."/>
        </authorList>
    </citation>
    <scope>GENOME REANNOTATION</scope>
    <source>
        <strain>ATCC 204508 / S288c</strain>
    </source>
</reference>
<reference key="4">
    <citation type="journal article" date="1997" name="Yeast">
        <title>Two-dimensional electrophoretic separation of yeast proteins using a non-linear wide range (pH 3-10) immobilized pH gradient in the first dimension; reproducibility and evidence for isoelectric focusing of alkaline (pI &gt; 7) proteins.</title>
        <authorList>
            <person name="Norbeck J."/>
            <person name="Blomberg A."/>
        </authorList>
    </citation>
    <scope>PROTEIN SEQUENCE OF 151-161 AND 274-281</scope>
    <source>
        <strain>ATCC 44827 / SKQ2N</strain>
    </source>
</reference>
<reference key="5">
    <citation type="journal article" date="2003" name="Nature">
        <title>Global analysis of protein expression in yeast.</title>
        <authorList>
            <person name="Ghaemmaghami S."/>
            <person name="Huh W.-K."/>
            <person name="Bower K."/>
            <person name="Howson R.W."/>
            <person name="Belle A."/>
            <person name="Dephoure N."/>
            <person name="O'Shea E.K."/>
            <person name="Weissman J.S."/>
        </authorList>
    </citation>
    <scope>LEVEL OF PROTEIN EXPRESSION [LARGE SCALE ANALYSIS]</scope>
</reference>
<reference key="6">
    <citation type="journal article" date="2008" name="Mol. Cell. Proteomics">
        <title>A multidimensional chromatography technology for in-depth phosphoproteome analysis.</title>
        <authorList>
            <person name="Albuquerque C.P."/>
            <person name="Smolka M.B."/>
            <person name="Payne S.H."/>
            <person name="Bafna V."/>
            <person name="Eng J."/>
            <person name="Zhou H."/>
        </authorList>
    </citation>
    <scope>PHOSPHORYLATION [LARGE SCALE ANALYSIS] AT SER-26 AND SER-429</scope>
    <scope>IDENTIFICATION BY MASS SPECTROMETRY [LARGE SCALE ANALYSIS]</scope>
</reference>
<reference key="7">
    <citation type="journal article" date="2009" name="Science">
        <title>Global analysis of Cdk1 substrate phosphorylation sites provides insights into evolution.</title>
        <authorList>
            <person name="Holt L.J."/>
            <person name="Tuch B.B."/>
            <person name="Villen J."/>
            <person name="Johnson A.D."/>
            <person name="Gygi S.P."/>
            <person name="Morgan D.O."/>
        </authorList>
    </citation>
    <scope>PHOSPHORYLATION [LARGE SCALE ANALYSIS] AT THR-20; SER-26 AND SER-429</scope>
    <scope>IDENTIFICATION BY MASS SPECTROMETRY [LARGE SCALE ANALYSIS]</scope>
</reference>
<reference key="8">
    <citation type="journal article" date="2012" name="Proteomics">
        <title>Sites of ubiquitin attachment in Saccharomyces cerevisiae.</title>
        <authorList>
            <person name="Starita L.M."/>
            <person name="Lo R.S."/>
            <person name="Eng J.K."/>
            <person name="von Haller P.D."/>
            <person name="Fields S."/>
        </authorList>
    </citation>
    <scope>UBIQUITINATION [LARGE SCALE ANALYSIS] AT LYS-456</scope>
    <scope>IDENTIFICATION BY MASS SPECTROMETRY [LARGE SCALE ANALYSIS]</scope>
</reference>
<accession>P37291</accession>
<accession>D6VY60</accession>